<proteinExistence type="inferred from homology"/>
<gene>
    <name evidence="1" type="primary">rplO</name>
    <name type="ordered locus">VCM66_2497</name>
</gene>
<evidence type="ECO:0000255" key="1">
    <source>
        <dbReference type="HAMAP-Rule" id="MF_01341"/>
    </source>
</evidence>
<evidence type="ECO:0000256" key="2">
    <source>
        <dbReference type="SAM" id="MobiDB-lite"/>
    </source>
</evidence>
<evidence type="ECO:0000305" key="3"/>
<accession>C3LRN9</accession>
<dbReference type="EMBL" id="CP001233">
    <property type="protein sequence ID" value="ACP06794.1"/>
    <property type="molecule type" value="Genomic_DNA"/>
</dbReference>
<dbReference type="RefSeq" id="WP_000926115.1">
    <property type="nucleotide sequence ID" value="NC_012578.1"/>
</dbReference>
<dbReference type="SMR" id="C3LRN9"/>
<dbReference type="GeneID" id="89513446"/>
<dbReference type="KEGG" id="vcm:VCM66_2497"/>
<dbReference type="HOGENOM" id="CLU_055188_4_2_6"/>
<dbReference type="Proteomes" id="UP000001217">
    <property type="component" value="Chromosome I"/>
</dbReference>
<dbReference type="GO" id="GO:0022625">
    <property type="term" value="C:cytosolic large ribosomal subunit"/>
    <property type="evidence" value="ECO:0007669"/>
    <property type="project" value="TreeGrafter"/>
</dbReference>
<dbReference type="GO" id="GO:0019843">
    <property type="term" value="F:rRNA binding"/>
    <property type="evidence" value="ECO:0007669"/>
    <property type="project" value="UniProtKB-UniRule"/>
</dbReference>
<dbReference type="GO" id="GO:0003735">
    <property type="term" value="F:structural constituent of ribosome"/>
    <property type="evidence" value="ECO:0007669"/>
    <property type="project" value="InterPro"/>
</dbReference>
<dbReference type="GO" id="GO:0006412">
    <property type="term" value="P:translation"/>
    <property type="evidence" value="ECO:0007669"/>
    <property type="project" value="UniProtKB-UniRule"/>
</dbReference>
<dbReference type="FunFam" id="3.100.10.10:FF:000003">
    <property type="entry name" value="50S ribosomal protein L15"/>
    <property type="match status" value="1"/>
</dbReference>
<dbReference type="Gene3D" id="3.100.10.10">
    <property type="match status" value="1"/>
</dbReference>
<dbReference type="HAMAP" id="MF_01341">
    <property type="entry name" value="Ribosomal_uL15"/>
    <property type="match status" value="1"/>
</dbReference>
<dbReference type="InterPro" id="IPR030878">
    <property type="entry name" value="Ribosomal_uL15"/>
</dbReference>
<dbReference type="InterPro" id="IPR021131">
    <property type="entry name" value="Ribosomal_uL15/eL18"/>
</dbReference>
<dbReference type="InterPro" id="IPR036227">
    <property type="entry name" value="Ribosomal_uL15/eL18_sf"/>
</dbReference>
<dbReference type="InterPro" id="IPR005749">
    <property type="entry name" value="Ribosomal_uL15_bac-type"/>
</dbReference>
<dbReference type="InterPro" id="IPR001196">
    <property type="entry name" value="Ribosomal_uL15_CS"/>
</dbReference>
<dbReference type="NCBIfam" id="TIGR01071">
    <property type="entry name" value="rplO_bact"/>
    <property type="match status" value="1"/>
</dbReference>
<dbReference type="PANTHER" id="PTHR12934">
    <property type="entry name" value="50S RIBOSOMAL PROTEIN L15"/>
    <property type="match status" value="1"/>
</dbReference>
<dbReference type="PANTHER" id="PTHR12934:SF11">
    <property type="entry name" value="LARGE RIBOSOMAL SUBUNIT PROTEIN UL15M"/>
    <property type="match status" value="1"/>
</dbReference>
<dbReference type="Pfam" id="PF00828">
    <property type="entry name" value="Ribosomal_L27A"/>
    <property type="match status" value="1"/>
</dbReference>
<dbReference type="SUPFAM" id="SSF52080">
    <property type="entry name" value="Ribosomal proteins L15p and L18e"/>
    <property type="match status" value="1"/>
</dbReference>
<dbReference type="PROSITE" id="PS00475">
    <property type="entry name" value="RIBOSOMAL_L15"/>
    <property type="match status" value="1"/>
</dbReference>
<keyword id="KW-0687">Ribonucleoprotein</keyword>
<keyword id="KW-0689">Ribosomal protein</keyword>
<keyword id="KW-0694">RNA-binding</keyword>
<keyword id="KW-0699">rRNA-binding</keyword>
<protein>
    <recommendedName>
        <fullName evidence="1">Large ribosomal subunit protein uL15</fullName>
    </recommendedName>
    <alternativeName>
        <fullName evidence="3">50S ribosomal protein L15</fullName>
    </alternativeName>
</protein>
<sequence length="144" mass="14946">MLLNTLSPAAGSKHAPKRLGRGVGSGLGKTGGRGHKGQKSRSGGKVRPGFEGGQMPLKQRLPKFGFTSRKSFVSAEVRLSELAKVTGDVVDLNALKAANLVTKNIEFAKIVLSGEINKAVTVKGLRVTKGAKAAIEAAGGKIEE</sequence>
<name>RL15_VIBCM</name>
<feature type="chain" id="PRO_1000166324" description="Large ribosomal subunit protein uL15">
    <location>
        <begin position="1"/>
        <end position="144"/>
    </location>
</feature>
<feature type="region of interest" description="Disordered" evidence="2">
    <location>
        <begin position="1"/>
        <end position="57"/>
    </location>
</feature>
<feature type="compositionally biased region" description="Gly residues" evidence="2">
    <location>
        <begin position="21"/>
        <end position="31"/>
    </location>
</feature>
<feature type="compositionally biased region" description="Basic residues" evidence="2">
    <location>
        <begin position="32"/>
        <end position="44"/>
    </location>
</feature>
<comment type="function">
    <text evidence="1">Binds to the 23S rRNA.</text>
</comment>
<comment type="subunit">
    <text evidence="1">Part of the 50S ribosomal subunit.</text>
</comment>
<comment type="similarity">
    <text evidence="1">Belongs to the universal ribosomal protein uL15 family.</text>
</comment>
<organism>
    <name type="scientific">Vibrio cholerae serotype O1 (strain M66-2)</name>
    <dbReference type="NCBI Taxonomy" id="579112"/>
    <lineage>
        <taxon>Bacteria</taxon>
        <taxon>Pseudomonadati</taxon>
        <taxon>Pseudomonadota</taxon>
        <taxon>Gammaproteobacteria</taxon>
        <taxon>Vibrionales</taxon>
        <taxon>Vibrionaceae</taxon>
        <taxon>Vibrio</taxon>
    </lineage>
</organism>
<reference key="1">
    <citation type="journal article" date="2008" name="PLoS ONE">
        <title>A recalibrated molecular clock and independent origins for the cholera pandemic clones.</title>
        <authorList>
            <person name="Feng L."/>
            <person name="Reeves P.R."/>
            <person name="Lan R."/>
            <person name="Ren Y."/>
            <person name="Gao C."/>
            <person name="Zhou Z."/>
            <person name="Ren Y."/>
            <person name="Cheng J."/>
            <person name="Wang W."/>
            <person name="Wang J."/>
            <person name="Qian W."/>
            <person name="Li D."/>
            <person name="Wang L."/>
        </authorList>
    </citation>
    <scope>NUCLEOTIDE SEQUENCE [LARGE SCALE GENOMIC DNA]</scope>
    <source>
        <strain>M66-2</strain>
    </source>
</reference>